<protein>
    <recommendedName>
        <fullName evidence="5">Kinesin-like protein KIN-7J</fullName>
    </recommendedName>
</protein>
<proteinExistence type="evidence at transcript level"/>
<gene>
    <name evidence="5" type="primary">KIN7J</name>
    <name evidence="7" type="ordered locus">Os09g0528000</name>
    <name evidence="5" type="ordered locus">LOC_Os09g35890</name>
    <name evidence="6" type="ORF">OJ1439_F07.32</name>
    <name evidence="8" type="ORF">OsJ_30085</name>
</gene>
<keyword id="KW-0067">ATP-binding</keyword>
<keyword id="KW-0175">Coiled coil</keyword>
<keyword id="KW-0493">Microtubule</keyword>
<keyword id="KW-0505">Motor protein</keyword>
<keyword id="KW-0547">Nucleotide-binding</keyword>
<keyword id="KW-1185">Reference proteome</keyword>
<name>KN7J_ORYSJ</name>
<evidence type="ECO:0000255" key="1"/>
<evidence type="ECO:0000255" key="2">
    <source>
        <dbReference type="PROSITE-ProRule" id="PRU00283"/>
    </source>
</evidence>
<evidence type="ECO:0000256" key="3">
    <source>
        <dbReference type="SAM" id="MobiDB-lite"/>
    </source>
</evidence>
<evidence type="ECO:0000303" key="4">
    <source>
    </source>
</evidence>
<evidence type="ECO:0000305" key="5"/>
<evidence type="ECO:0000312" key="6">
    <source>
        <dbReference type="EMBL" id="BAD46370.1"/>
    </source>
</evidence>
<evidence type="ECO:0000312" key="7">
    <source>
        <dbReference type="EMBL" id="BAT09068.1"/>
    </source>
</evidence>
<evidence type="ECO:0000312" key="8">
    <source>
        <dbReference type="EMBL" id="EEE70089.1"/>
    </source>
</evidence>
<sequence>MAGEERPERIVVSVRLRPVNAREAERGDGSDWECAGPTTLTFRGAVPERAMFPASYSYDRVFSHECGTRQVYDEGARQVAMSVLSGINASIFAYGQTSSGKTYTMVGITEYSMSDIYDYIEKHPEREFILKFSAMEIYNEAVRDLLSSDATPLRLLDDPEKGTVVEKLTEETLRDKGHLLELLAVCEAQRQIGETAMNEASSRSHQILRMTVESSAKQFLGKGNSSTLIACVNFVDLAGSERASQTASAGMRLKEGSHINRSLLTLGKVIRQLSKGRNGHIPYRDSKLTRILQSSLGGNARTAIICTMSPAHCHIEQSRNTLLFANCAKDVVTNAQVNVVMSDKALVKHLQREIARLENELKFPASASCTSHAEILREKDELIKNLEEQLKELMEQKDTVQSQLDNFRKVASDGDINNHLARRWSRSSDSIPRIVSEGAFSSSDTQDIDYQDQTMDELSVPHSFPPSSQISDITEEHEAQRVAHRAESEPPEEHCKEVQCIETNKLRSRRSQEFFQTPEKKTHTDDQKHSESMSNSAENAIKLYACDFEPSFDLEKPETEESLALKRCVVSSRDSALTRSRSCRASFMVIPNSWFDDSASTTPSSETFRYSTRRPEKVRKSLSPDEIADKSTGNAEEDKSTCNAEEETAVNDIGCVTEVKQKTEMNHAPQSSEQHQPKIAKEVATVSLSKWHIDFERKQQEIIELWHDCNVSIVHRTYFFLLFKGDQTDSIYMEVEHRRLSFIKNSLIADGELHATTASSLRNLRHERDMLYRQMVRKLHLAEKERLYGKWGIDMSTKQRRLQLSRRIWTQTGMDHVRESAALVAKLVEHLEKGQAIREMFGLSFSFKPRRSFSWVGVYSRD</sequence>
<comment type="similarity">
    <text evidence="4">Belongs to the TRAFAC class myosin-kinesin ATPase superfamily. Kinesin family. KIN-7 subfamily.</text>
</comment>
<comment type="sequence caution" evidence="5">
    <conflict type="erroneous gene model prediction">
        <sequence resource="EMBL-CDS" id="EEE70089"/>
    </conflict>
</comment>
<feature type="chain" id="PRO_0000436631" description="Kinesin-like protein KIN-7J">
    <location>
        <begin position="1"/>
        <end position="862"/>
    </location>
</feature>
<feature type="domain" description="Kinesin motor" evidence="2">
    <location>
        <begin position="9"/>
        <end position="331"/>
    </location>
</feature>
<feature type="region of interest" description="Disordered" evidence="3">
    <location>
        <begin position="475"/>
        <end position="532"/>
    </location>
</feature>
<feature type="region of interest" description="Disordered" evidence="3">
    <location>
        <begin position="596"/>
        <end position="643"/>
    </location>
</feature>
<feature type="coiled-coil region" evidence="1">
    <location>
        <begin position="340"/>
        <end position="415"/>
    </location>
</feature>
<feature type="compositionally biased region" description="Basic and acidic residues" evidence="3">
    <location>
        <begin position="475"/>
        <end position="499"/>
    </location>
</feature>
<feature type="compositionally biased region" description="Basic and acidic residues" evidence="3">
    <location>
        <begin position="518"/>
        <end position="531"/>
    </location>
</feature>
<feature type="compositionally biased region" description="Polar residues" evidence="3">
    <location>
        <begin position="598"/>
        <end position="610"/>
    </location>
</feature>
<feature type="compositionally biased region" description="Basic and acidic residues" evidence="3">
    <location>
        <begin position="613"/>
        <end position="629"/>
    </location>
</feature>
<feature type="binding site" evidence="2">
    <location>
        <begin position="95"/>
        <end position="102"/>
    </location>
    <ligand>
        <name>ATP</name>
        <dbReference type="ChEBI" id="CHEBI:30616"/>
    </ligand>
</feature>
<organism>
    <name type="scientific">Oryza sativa subsp. japonica</name>
    <name type="common">Rice</name>
    <dbReference type="NCBI Taxonomy" id="39947"/>
    <lineage>
        <taxon>Eukaryota</taxon>
        <taxon>Viridiplantae</taxon>
        <taxon>Streptophyta</taxon>
        <taxon>Embryophyta</taxon>
        <taxon>Tracheophyta</taxon>
        <taxon>Spermatophyta</taxon>
        <taxon>Magnoliopsida</taxon>
        <taxon>Liliopsida</taxon>
        <taxon>Poales</taxon>
        <taxon>Poaceae</taxon>
        <taxon>BOP clade</taxon>
        <taxon>Oryzoideae</taxon>
        <taxon>Oryzeae</taxon>
        <taxon>Oryzinae</taxon>
        <taxon>Oryza</taxon>
        <taxon>Oryza sativa</taxon>
    </lineage>
</organism>
<dbReference type="EMBL" id="AP005681">
    <property type="protein sequence ID" value="BAD46370.1"/>
    <property type="molecule type" value="Genomic_DNA"/>
</dbReference>
<dbReference type="EMBL" id="AP008215">
    <property type="protein sequence ID" value="BAF25648.2"/>
    <property type="molecule type" value="Genomic_DNA"/>
</dbReference>
<dbReference type="EMBL" id="AP014965">
    <property type="protein sequence ID" value="BAT09068.1"/>
    <property type="molecule type" value="Genomic_DNA"/>
</dbReference>
<dbReference type="EMBL" id="AP014965">
    <property type="protein sequence ID" value="BAT09069.1"/>
    <property type="molecule type" value="Genomic_DNA"/>
</dbReference>
<dbReference type="EMBL" id="CM000146">
    <property type="protein sequence ID" value="EEE70089.1"/>
    <property type="status" value="ALT_SEQ"/>
    <property type="molecule type" value="Genomic_DNA"/>
</dbReference>
<dbReference type="EMBL" id="AK072633">
    <property type="protein sequence ID" value="BAG93071.1"/>
    <property type="molecule type" value="mRNA"/>
</dbReference>
<dbReference type="RefSeq" id="NP_001390859.1">
    <property type="nucleotide sequence ID" value="NM_001403930.1"/>
</dbReference>
<dbReference type="RefSeq" id="XP_015610830.1">
    <property type="nucleotide sequence ID" value="XM_015755344.1"/>
</dbReference>
<dbReference type="RefSeq" id="XP_015610831.1">
    <property type="nucleotide sequence ID" value="XM_015755345.1"/>
</dbReference>
<dbReference type="SMR" id="Q651Z7"/>
<dbReference type="STRING" id="39947.Q651Z7"/>
<dbReference type="PaxDb" id="39947-Q651Z7"/>
<dbReference type="EnsemblPlants" id="Os09t0528000-01">
    <property type="protein sequence ID" value="Os09t0528000-01"/>
    <property type="gene ID" value="Os09g0528000"/>
</dbReference>
<dbReference type="EnsemblPlants" id="Os09t0528000-02">
    <property type="protein sequence ID" value="Os09t0528000-02"/>
    <property type="gene ID" value="Os09g0528000"/>
</dbReference>
<dbReference type="GeneID" id="4347645"/>
<dbReference type="Gramene" id="Os09t0528000-01">
    <property type="protein sequence ID" value="Os09t0528000-01"/>
    <property type="gene ID" value="Os09g0528000"/>
</dbReference>
<dbReference type="Gramene" id="Os09t0528000-02">
    <property type="protein sequence ID" value="Os09t0528000-02"/>
    <property type="gene ID" value="Os09g0528000"/>
</dbReference>
<dbReference type="KEGG" id="dosa:Os09g0528000"/>
<dbReference type="eggNOG" id="KOG0242">
    <property type="taxonomic scope" value="Eukaryota"/>
</dbReference>
<dbReference type="HOGENOM" id="CLU_013407_1_0_1"/>
<dbReference type="InParanoid" id="Q651Z7"/>
<dbReference type="OMA" id="AIKLYAC"/>
<dbReference type="OrthoDB" id="3176171at2759"/>
<dbReference type="Proteomes" id="UP000000763">
    <property type="component" value="Chromosome 9"/>
</dbReference>
<dbReference type="Proteomes" id="UP000007752">
    <property type="component" value="Chromosome 9"/>
</dbReference>
<dbReference type="Proteomes" id="UP000059680">
    <property type="component" value="Chromosome 9"/>
</dbReference>
<dbReference type="GO" id="GO:0005874">
    <property type="term" value="C:microtubule"/>
    <property type="evidence" value="ECO:0007669"/>
    <property type="project" value="UniProtKB-KW"/>
</dbReference>
<dbReference type="GO" id="GO:0005524">
    <property type="term" value="F:ATP binding"/>
    <property type="evidence" value="ECO:0007669"/>
    <property type="project" value="UniProtKB-KW"/>
</dbReference>
<dbReference type="GO" id="GO:0008017">
    <property type="term" value="F:microtubule binding"/>
    <property type="evidence" value="ECO:0007669"/>
    <property type="project" value="InterPro"/>
</dbReference>
<dbReference type="GO" id="GO:0003777">
    <property type="term" value="F:microtubule motor activity"/>
    <property type="evidence" value="ECO:0007669"/>
    <property type="project" value="InterPro"/>
</dbReference>
<dbReference type="GO" id="GO:0007018">
    <property type="term" value="P:microtubule-based movement"/>
    <property type="evidence" value="ECO:0007669"/>
    <property type="project" value="InterPro"/>
</dbReference>
<dbReference type="CDD" id="cd01374">
    <property type="entry name" value="KISc_CENP_E"/>
    <property type="match status" value="1"/>
</dbReference>
<dbReference type="FunFam" id="3.40.850.10:FF:000016">
    <property type="entry name" value="Kinesin-like protein"/>
    <property type="match status" value="1"/>
</dbReference>
<dbReference type="Gene3D" id="3.40.850.10">
    <property type="entry name" value="Kinesin motor domain"/>
    <property type="match status" value="1"/>
</dbReference>
<dbReference type="InterPro" id="IPR027640">
    <property type="entry name" value="Kinesin-like_fam"/>
</dbReference>
<dbReference type="InterPro" id="IPR001752">
    <property type="entry name" value="Kinesin_motor_dom"/>
</dbReference>
<dbReference type="InterPro" id="IPR036961">
    <property type="entry name" value="Kinesin_motor_dom_sf"/>
</dbReference>
<dbReference type="InterPro" id="IPR021881">
    <property type="entry name" value="NACK_C"/>
</dbReference>
<dbReference type="InterPro" id="IPR027417">
    <property type="entry name" value="P-loop_NTPase"/>
</dbReference>
<dbReference type="PANTHER" id="PTHR47968">
    <property type="entry name" value="CENTROMERE PROTEIN E"/>
    <property type="match status" value="1"/>
</dbReference>
<dbReference type="PANTHER" id="PTHR47968:SF32">
    <property type="entry name" value="KINESIN-LIKE PROTEIN KIN-7J"/>
    <property type="match status" value="1"/>
</dbReference>
<dbReference type="Pfam" id="PF11995">
    <property type="entry name" value="DUF3490"/>
    <property type="match status" value="1"/>
</dbReference>
<dbReference type="Pfam" id="PF00225">
    <property type="entry name" value="Kinesin"/>
    <property type="match status" value="1"/>
</dbReference>
<dbReference type="PRINTS" id="PR00380">
    <property type="entry name" value="KINESINHEAVY"/>
</dbReference>
<dbReference type="SMART" id="SM00129">
    <property type="entry name" value="KISc"/>
    <property type="match status" value="1"/>
</dbReference>
<dbReference type="SUPFAM" id="SSF52540">
    <property type="entry name" value="P-loop containing nucleoside triphosphate hydrolases"/>
    <property type="match status" value="1"/>
</dbReference>
<dbReference type="PROSITE" id="PS50067">
    <property type="entry name" value="KINESIN_MOTOR_2"/>
    <property type="match status" value="1"/>
</dbReference>
<reference key="1">
    <citation type="journal article" date="2005" name="Nature">
        <title>The map-based sequence of the rice genome.</title>
        <authorList>
            <consortium name="International rice genome sequencing project (IRGSP)"/>
        </authorList>
    </citation>
    <scope>NUCLEOTIDE SEQUENCE [LARGE SCALE GENOMIC DNA]</scope>
    <source>
        <strain>cv. Nipponbare</strain>
    </source>
</reference>
<reference key="2">
    <citation type="journal article" date="2008" name="Nucleic Acids Res.">
        <title>The rice annotation project database (RAP-DB): 2008 update.</title>
        <authorList>
            <consortium name="The rice annotation project (RAP)"/>
        </authorList>
    </citation>
    <scope>GENOME REANNOTATION</scope>
    <source>
        <strain>cv. Nipponbare</strain>
    </source>
</reference>
<reference key="3">
    <citation type="journal article" date="2013" name="Rice">
        <title>Improvement of the Oryza sativa Nipponbare reference genome using next generation sequence and optical map data.</title>
        <authorList>
            <person name="Kawahara Y."/>
            <person name="de la Bastide M."/>
            <person name="Hamilton J.P."/>
            <person name="Kanamori H."/>
            <person name="McCombie W.R."/>
            <person name="Ouyang S."/>
            <person name="Schwartz D.C."/>
            <person name="Tanaka T."/>
            <person name="Wu J."/>
            <person name="Zhou S."/>
            <person name="Childs K.L."/>
            <person name="Davidson R.M."/>
            <person name="Lin H."/>
            <person name="Quesada-Ocampo L."/>
            <person name="Vaillancourt B."/>
            <person name="Sakai H."/>
            <person name="Lee S.S."/>
            <person name="Kim J."/>
            <person name="Numa H."/>
            <person name="Itoh T."/>
            <person name="Buell C.R."/>
            <person name="Matsumoto T."/>
        </authorList>
    </citation>
    <scope>GENOME REANNOTATION</scope>
    <source>
        <strain>cv. Nipponbare</strain>
    </source>
</reference>
<reference key="4">
    <citation type="journal article" date="2005" name="PLoS Biol.">
        <title>The genomes of Oryza sativa: a history of duplications.</title>
        <authorList>
            <person name="Yu J."/>
            <person name="Wang J."/>
            <person name="Lin W."/>
            <person name="Li S."/>
            <person name="Li H."/>
            <person name="Zhou J."/>
            <person name="Ni P."/>
            <person name="Dong W."/>
            <person name="Hu S."/>
            <person name="Zeng C."/>
            <person name="Zhang J."/>
            <person name="Zhang Y."/>
            <person name="Li R."/>
            <person name="Xu Z."/>
            <person name="Li S."/>
            <person name="Li X."/>
            <person name="Zheng H."/>
            <person name="Cong L."/>
            <person name="Lin L."/>
            <person name="Yin J."/>
            <person name="Geng J."/>
            <person name="Li G."/>
            <person name="Shi J."/>
            <person name="Liu J."/>
            <person name="Lv H."/>
            <person name="Li J."/>
            <person name="Wang J."/>
            <person name="Deng Y."/>
            <person name="Ran L."/>
            <person name="Shi X."/>
            <person name="Wang X."/>
            <person name="Wu Q."/>
            <person name="Li C."/>
            <person name="Ren X."/>
            <person name="Wang J."/>
            <person name="Wang X."/>
            <person name="Li D."/>
            <person name="Liu D."/>
            <person name="Zhang X."/>
            <person name="Ji Z."/>
            <person name="Zhao W."/>
            <person name="Sun Y."/>
            <person name="Zhang Z."/>
            <person name="Bao J."/>
            <person name="Han Y."/>
            <person name="Dong L."/>
            <person name="Ji J."/>
            <person name="Chen P."/>
            <person name="Wu S."/>
            <person name="Liu J."/>
            <person name="Xiao Y."/>
            <person name="Bu D."/>
            <person name="Tan J."/>
            <person name="Yang L."/>
            <person name="Ye C."/>
            <person name="Zhang J."/>
            <person name="Xu J."/>
            <person name="Zhou Y."/>
            <person name="Yu Y."/>
            <person name="Zhang B."/>
            <person name="Zhuang S."/>
            <person name="Wei H."/>
            <person name="Liu B."/>
            <person name="Lei M."/>
            <person name="Yu H."/>
            <person name="Li Y."/>
            <person name="Xu H."/>
            <person name="Wei S."/>
            <person name="He X."/>
            <person name="Fang L."/>
            <person name="Zhang Z."/>
            <person name="Zhang Y."/>
            <person name="Huang X."/>
            <person name="Su Z."/>
            <person name="Tong W."/>
            <person name="Li J."/>
            <person name="Tong Z."/>
            <person name="Li S."/>
            <person name="Ye J."/>
            <person name="Wang L."/>
            <person name="Fang L."/>
            <person name="Lei T."/>
            <person name="Chen C.-S."/>
            <person name="Chen H.-C."/>
            <person name="Xu Z."/>
            <person name="Li H."/>
            <person name="Huang H."/>
            <person name="Zhang F."/>
            <person name="Xu H."/>
            <person name="Li N."/>
            <person name="Zhao C."/>
            <person name="Li S."/>
            <person name="Dong L."/>
            <person name="Huang Y."/>
            <person name="Li L."/>
            <person name="Xi Y."/>
            <person name="Qi Q."/>
            <person name="Li W."/>
            <person name="Zhang B."/>
            <person name="Hu W."/>
            <person name="Zhang Y."/>
            <person name="Tian X."/>
            <person name="Jiao Y."/>
            <person name="Liang X."/>
            <person name="Jin J."/>
            <person name="Gao L."/>
            <person name="Zheng W."/>
            <person name="Hao B."/>
            <person name="Liu S.-M."/>
            <person name="Wang W."/>
            <person name="Yuan L."/>
            <person name="Cao M."/>
            <person name="McDermott J."/>
            <person name="Samudrala R."/>
            <person name="Wang J."/>
            <person name="Wong G.K.-S."/>
            <person name="Yang H."/>
        </authorList>
    </citation>
    <scope>NUCLEOTIDE SEQUENCE [LARGE SCALE GENOMIC DNA]</scope>
    <source>
        <strain>cv. Nipponbare</strain>
    </source>
</reference>
<reference key="5">
    <citation type="journal article" date="2003" name="Science">
        <title>Collection, mapping, and annotation of over 28,000 cDNA clones from japonica rice.</title>
        <authorList>
            <consortium name="The rice full-length cDNA consortium"/>
        </authorList>
    </citation>
    <scope>NUCLEOTIDE SEQUENCE [LARGE SCALE MRNA]</scope>
    <source>
        <strain>cv. Nipponbare</strain>
    </source>
</reference>
<reference key="6">
    <citation type="journal article" date="2009" name="Ann. Bot.">
        <title>Evaluating the microtubule cytoskeleton and its interacting proteins in monocots by mining the rice genome.</title>
        <authorList>
            <person name="Guo L."/>
            <person name="Ho C.M."/>
            <person name="Kong Z."/>
            <person name="Lee Y.R."/>
            <person name="Qian Q."/>
            <person name="Liu B."/>
        </authorList>
    </citation>
    <scope>GENE FAMILY</scope>
    <scope>NOMENCLATURE</scope>
</reference>
<accession>Q651Z7</accession>
<accession>A0A0P0XPB7</accession>
<accession>B9G4P1</accession>
<accession>Q0J067</accession>